<name>Y351_NITMU</name>
<accession>Q2YC62</accession>
<feature type="chain" id="PRO_0000282242" description="UPF0060 membrane protein Nmul_A0351">
    <location>
        <begin position="1"/>
        <end position="110"/>
    </location>
</feature>
<feature type="transmembrane region" description="Helical" evidence="1">
    <location>
        <begin position="7"/>
        <end position="27"/>
    </location>
</feature>
<feature type="transmembrane region" description="Helical" evidence="1">
    <location>
        <begin position="33"/>
        <end position="53"/>
    </location>
</feature>
<feature type="transmembrane region" description="Helical" evidence="1">
    <location>
        <begin position="63"/>
        <end position="83"/>
    </location>
</feature>
<feature type="transmembrane region" description="Helical" evidence="1">
    <location>
        <begin position="87"/>
        <end position="107"/>
    </location>
</feature>
<sequence length="110" mass="11990">MFELKTLFLFLATALAEIVGCYLPYLWLKRDGSAWLLVPAAASLALFAWLLTLHPTDAGRTYAAYGGVYVSVAVLWLWAVDGVRPTAWDMAGSLLALTGMAIIMFGPRHA</sequence>
<protein>
    <recommendedName>
        <fullName evidence="1">UPF0060 membrane protein Nmul_A0351</fullName>
    </recommendedName>
</protein>
<dbReference type="EMBL" id="CP000103">
    <property type="protein sequence ID" value="ABB73659.1"/>
    <property type="molecule type" value="Genomic_DNA"/>
</dbReference>
<dbReference type="RefSeq" id="WP_011379713.1">
    <property type="nucleotide sequence ID" value="NC_007614.1"/>
</dbReference>
<dbReference type="SMR" id="Q2YC62"/>
<dbReference type="STRING" id="323848.Nmul_A0351"/>
<dbReference type="KEGG" id="nmu:Nmul_A0351"/>
<dbReference type="eggNOG" id="COG1742">
    <property type="taxonomic scope" value="Bacteria"/>
</dbReference>
<dbReference type="HOGENOM" id="CLU_117653_2_0_4"/>
<dbReference type="OrthoDB" id="123240at2"/>
<dbReference type="Proteomes" id="UP000002718">
    <property type="component" value="Chromosome"/>
</dbReference>
<dbReference type="GO" id="GO:0005886">
    <property type="term" value="C:plasma membrane"/>
    <property type="evidence" value="ECO:0007669"/>
    <property type="project" value="UniProtKB-SubCell"/>
</dbReference>
<dbReference type="HAMAP" id="MF_00010">
    <property type="entry name" value="UPF0060"/>
    <property type="match status" value="1"/>
</dbReference>
<dbReference type="InterPro" id="IPR003844">
    <property type="entry name" value="UPF0060"/>
</dbReference>
<dbReference type="NCBIfam" id="NF002586">
    <property type="entry name" value="PRK02237.1"/>
    <property type="match status" value="1"/>
</dbReference>
<dbReference type="PANTHER" id="PTHR36116">
    <property type="entry name" value="UPF0060 MEMBRANE PROTEIN YNFA"/>
    <property type="match status" value="1"/>
</dbReference>
<dbReference type="PANTHER" id="PTHR36116:SF1">
    <property type="entry name" value="UPF0060 MEMBRANE PROTEIN YNFA"/>
    <property type="match status" value="1"/>
</dbReference>
<dbReference type="Pfam" id="PF02694">
    <property type="entry name" value="UPF0060"/>
    <property type="match status" value="1"/>
</dbReference>
<dbReference type="SUPFAM" id="SSF103481">
    <property type="entry name" value="Multidrug resistance efflux transporter EmrE"/>
    <property type="match status" value="1"/>
</dbReference>
<gene>
    <name type="ordered locus">Nmul_A0351</name>
</gene>
<keyword id="KW-0997">Cell inner membrane</keyword>
<keyword id="KW-1003">Cell membrane</keyword>
<keyword id="KW-0472">Membrane</keyword>
<keyword id="KW-1185">Reference proteome</keyword>
<keyword id="KW-0812">Transmembrane</keyword>
<keyword id="KW-1133">Transmembrane helix</keyword>
<reference key="1">
    <citation type="submission" date="2005-08" db="EMBL/GenBank/DDBJ databases">
        <title>Complete sequence of chromosome 1 of Nitrosospira multiformis ATCC 25196.</title>
        <authorList>
            <person name="Copeland A."/>
            <person name="Lucas S."/>
            <person name="Lapidus A."/>
            <person name="Barry K."/>
            <person name="Detter J.C."/>
            <person name="Glavina T."/>
            <person name="Hammon N."/>
            <person name="Israni S."/>
            <person name="Pitluck S."/>
            <person name="Chain P."/>
            <person name="Malfatti S."/>
            <person name="Shin M."/>
            <person name="Vergez L."/>
            <person name="Schmutz J."/>
            <person name="Larimer F."/>
            <person name="Land M."/>
            <person name="Hauser L."/>
            <person name="Kyrpides N."/>
            <person name="Lykidis A."/>
            <person name="Richardson P."/>
        </authorList>
    </citation>
    <scope>NUCLEOTIDE SEQUENCE [LARGE SCALE GENOMIC DNA]</scope>
    <source>
        <strain>ATCC 25196 / NCIMB 11849 / C 71</strain>
    </source>
</reference>
<evidence type="ECO:0000255" key="1">
    <source>
        <dbReference type="HAMAP-Rule" id="MF_00010"/>
    </source>
</evidence>
<comment type="subcellular location">
    <subcellularLocation>
        <location evidence="1">Cell inner membrane</location>
        <topology evidence="1">Multi-pass membrane protein</topology>
    </subcellularLocation>
</comment>
<comment type="similarity">
    <text evidence="1">Belongs to the UPF0060 family.</text>
</comment>
<organism>
    <name type="scientific">Nitrosospira multiformis (strain ATCC 25196 / NCIMB 11849 / C 71)</name>
    <dbReference type="NCBI Taxonomy" id="323848"/>
    <lineage>
        <taxon>Bacteria</taxon>
        <taxon>Pseudomonadati</taxon>
        <taxon>Pseudomonadota</taxon>
        <taxon>Betaproteobacteria</taxon>
        <taxon>Nitrosomonadales</taxon>
        <taxon>Nitrosomonadaceae</taxon>
        <taxon>Nitrosospira</taxon>
    </lineage>
</organism>
<proteinExistence type="inferred from homology"/>